<dbReference type="EMBL" id="CP000698">
    <property type="protein sequence ID" value="ABQ27914.1"/>
    <property type="molecule type" value="Genomic_DNA"/>
</dbReference>
<dbReference type="RefSeq" id="WP_011940563.1">
    <property type="nucleotide sequence ID" value="NC_009483.1"/>
</dbReference>
<dbReference type="SMR" id="A5G7Z6"/>
<dbReference type="STRING" id="351605.Gura_3761"/>
<dbReference type="KEGG" id="gur:Gura_3761"/>
<dbReference type="HOGENOM" id="CLU_077636_1_0_7"/>
<dbReference type="OrthoDB" id="9783509at2"/>
<dbReference type="Proteomes" id="UP000006695">
    <property type="component" value="Chromosome"/>
</dbReference>
<dbReference type="GO" id="GO:0005737">
    <property type="term" value="C:cytoplasm"/>
    <property type="evidence" value="ECO:0007669"/>
    <property type="project" value="UniProtKB-SubCell"/>
</dbReference>
<dbReference type="GO" id="GO:0005840">
    <property type="term" value="C:ribosome"/>
    <property type="evidence" value="ECO:0007669"/>
    <property type="project" value="InterPro"/>
</dbReference>
<dbReference type="GO" id="GO:0043022">
    <property type="term" value="F:ribosome binding"/>
    <property type="evidence" value="ECO:0007669"/>
    <property type="project" value="InterPro"/>
</dbReference>
<dbReference type="GO" id="GO:0042274">
    <property type="term" value="P:ribosomal small subunit biogenesis"/>
    <property type="evidence" value="ECO:0007669"/>
    <property type="project" value="UniProtKB-UniRule"/>
</dbReference>
<dbReference type="GO" id="GO:0006364">
    <property type="term" value="P:rRNA processing"/>
    <property type="evidence" value="ECO:0007669"/>
    <property type="project" value="UniProtKB-UniRule"/>
</dbReference>
<dbReference type="Gene3D" id="2.30.30.240">
    <property type="entry name" value="PRC-barrel domain"/>
    <property type="match status" value="1"/>
</dbReference>
<dbReference type="Gene3D" id="2.40.30.60">
    <property type="entry name" value="RimM"/>
    <property type="match status" value="1"/>
</dbReference>
<dbReference type="HAMAP" id="MF_00014">
    <property type="entry name" value="Ribosome_mat_RimM"/>
    <property type="match status" value="1"/>
</dbReference>
<dbReference type="InterPro" id="IPR011033">
    <property type="entry name" value="PRC_barrel-like_sf"/>
</dbReference>
<dbReference type="InterPro" id="IPR056792">
    <property type="entry name" value="PRC_RimM"/>
</dbReference>
<dbReference type="InterPro" id="IPR011961">
    <property type="entry name" value="RimM"/>
</dbReference>
<dbReference type="InterPro" id="IPR002676">
    <property type="entry name" value="RimM_N"/>
</dbReference>
<dbReference type="InterPro" id="IPR036976">
    <property type="entry name" value="RimM_N_sf"/>
</dbReference>
<dbReference type="InterPro" id="IPR009000">
    <property type="entry name" value="Transl_B-barrel_sf"/>
</dbReference>
<dbReference type="NCBIfam" id="TIGR02273">
    <property type="entry name" value="16S_RimM"/>
    <property type="match status" value="1"/>
</dbReference>
<dbReference type="PANTHER" id="PTHR33692">
    <property type="entry name" value="RIBOSOME MATURATION FACTOR RIMM"/>
    <property type="match status" value="1"/>
</dbReference>
<dbReference type="PANTHER" id="PTHR33692:SF1">
    <property type="entry name" value="RIBOSOME MATURATION FACTOR RIMM"/>
    <property type="match status" value="1"/>
</dbReference>
<dbReference type="Pfam" id="PF24986">
    <property type="entry name" value="PRC_RimM"/>
    <property type="match status" value="1"/>
</dbReference>
<dbReference type="Pfam" id="PF01782">
    <property type="entry name" value="RimM"/>
    <property type="match status" value="1"/>
</dbReference>
<dbReference type="SUPFAM" id="SSF50346">
    <property type="entry name" value="PRC-barrel domain"/>
    <property type="match status" value="1"/>
</dbReference>
<dbReference type="SUPFAM" id="SSF50447">
    <property type="entry name" value="Translation proteins"/>
    <property type="match status" value="1"/>
</dbReference>
<feature type="chain" id="PRO_0000351761" description="Ribosome maturation factor RimM">
    <location>
        <begin position="1"/>
        <end position="173"/>
    </location>
</feature>
<feature type="domain" description="PRC barrel" evidence="1">
    <location>
        <begin position="98"/>
        <end position="170"/>
    </location>
</feature>
<reference key="1">
    <citation type="submission" date="2007-05" db="EMBL/GenBank/DDBJ databases">
        <title>Complete sequence of Geobacter uraniireducens Rf4.</title>
        <authorList>
            <consortium name="US DOE Joint Genome Institute"/>
            <person name="Copeland A."/>
            <person name="Lucas S."/>
            <person name="Lapidus A."/>
            <person name="Barry K."/>
            <person name="Detter J.C."/>
            <person name="Glavina del Rio T."/>
            <person name="Hammon N."/>
            <person name="Israni S."/>
            <person name="Dalin E."/>
            <person name="Tice H."/>
            <person name="Pitluck S."/>
            <person name="Chertkov O."/>
            <person name="Brettin T."/>
            <person name="Bruce D."/>
            <person name="Han C."/>
            <person name="Schmutz J."/>
            <person name="Larimer F."/>
            <person name="Land M."/>
            <person name="Hauser L."/>
            <person name="Kyrpides N."/>
            <person name="Mikhailova N."/>
            <person name="Shelobolina E."/>
            <person name="Aklujkar M."/>
            <person name="Lovley D."/>
            <person name="Richardson P."/>
        </authorList>
    </citation>
    <scope>NUCLEOTIDE SEQUENCE [LARGE SCALE GENOMIC DNA]</scope>
    <source>
        <strain>ATCC BAA-1134 / JCM 13001 / Rf4</strain>
    </source>
</reference>
<sequence length="173" mass="18746">MSSGNETVLIGKVSATHGVRGQLRITPFSGDVDSLLTLRSIMVKKPGGEMEIFAVAASKAHGKKVIITLKAFDNINQVLHLVGRELYALREQLPELPEDEYYWCDLLGLQVVTEEGESLGELVDIIVTGSNDVYVVQGSGREILIPALADVVLDVDSDAKRMTVSLPEGLLDL</sequence>
<accession>A5G7Z6</accession>
<name>RIMM_GEOUR</name>
<keyword id="KW-0143">Chaperone</keyword>
<keyword id="KW-0963">Cytoplasm</keyword>
<keyword id="KW-1185">Reference proteome</keyword>
<keyword id="KW-0690">Ribosome biogenesis</keyword>
<keyword id="KW-0698">rRNA processing</keyword>
<proteinExistence type="inferred from homology"/>
<organism>
    <name type="scientific">Geotalea uraniireducens (strain Rf4)</name>
    <name type="common">Geobacter uraniireducens</name>
    <dbReference type="NCBI Taxonomy" id="351605"/>
    <lineage>
        <taxon>Bacteria</taxon>
        <taxon>Pseudomonadati</taxon>
        <taxon>Thermodesulfobacteriota</taxon>
        <taxon>Desulfuromonadia</taxon>
        <taxon>Geobacterales</taxon>
        <taxon>Geobacteraceae</taxon>
        <taxon>Geotalea</taxon>
    </lineage>
</organism>
<gene>
    <name evidence="1" type="primary">rimM</name>
    <name type="ordered locus">Gura_3761</name>
</gene>
<comment type="function">
    <text evidence="1">An accessory protein needed during the final step in the assembly of 30S ribosomal subunit, possibly for assembly of the head region. Essential for efficient processing of 16S rRNA. May be needed both before and after RbfA during the maturation of 16S rRNA. It has affinity for free ribosomal 30S subunits but not for 70S ribosomes.</text>
</comment>
<comment type="subunit">
    <text evidence="1">Binds ribosomal protein uS19.</text>
</comment>
<comment type="subcellular location">
    <subcellularLocation>
        <location evidence="1">Cytoplasm</location>
    </subcellularLocation>
</comment>
<comment type="domain">
    <text evidence="1">The PRC barrel domain binds ribosomal protein uS19.</text>
</comment>
<comment type="similarity">
    <text evidence="1">Belongs to the RimM family.</text>
</comment>
<evidence type="ECO:0000255" key="1">
    <source>
        <dbReference type="HAMAP-Rule" id="MF_00014"/>
    </source>
</evidence>
<protein>
    <recommendedName>
        <fullName evidence="1">Ribosome maturation factor RimM</fullName>
    </recommendedName>
</protein>